<name>LOLD_ECOL5</name>
<dbReference type="EC" id="7.6.2.-" evidence="1"/>
<dbReference type="EMBL" id="CP000247">
    <property type="protein sequence ID" value="ABG69123.1"/>
    <property type="status" value="ALT_INIT"/>
    <property type="molecule type" value="Genomic_DNA"/>
</dbReference>
<dbReference type="RefSeq" id="WP_001033695.1">
    <property type="nucleotide sequence ID" value="NC_008253.1"/>
</dbReference>
<dbReference type="SMR" id="Q0TIV6"/>
<dbReference type="GeneID" id="93776291"/>
<dbReference type="KEGG" id="ecp:ECP_1110"/>
<dbReference type="HOGENOM" id="CLU_000604_1_22_6"/>
<dbReference type="Proteomes" id="UP000009182">
    <property type="component" value="Chromosome"/>
</dbReference>
<dbReference type="GO" id="GO:0005886">
    <property type="term" value="C:plasma membrane"/>
    <property type="evidence" value="ECO:0007669"/>
    <property type="project" value="UniProtKB-SubCell"/>
</dbReference>
<dbReference type="GO" id="GO:0005524">
    <property type="term" value="F:ATP binding"/>
    <property type="evidence" value="ECO:0007669"/>
    <property type="project" value="UniProtKB-KW"/>
</dbReference>
<dbReference type="GO" id="GO:0016887">
    <property type="term" value="F:ATP hydrolysis activity"/>
    <property type="evidence" value="ECO:0007669"/>
    <property type="project" value="InterPro"/>
</dbReference>
<dbReference type="GO" id="GO:0022857">
    <property type="term" value="F:transmembrane transporter activity"/>
    <property type="evidence" value="ECO:0007669"/>
    <property type="project" value="TreeGrafter"/>
</dbReference>
<dbReference type="GO" id="GO:0044874">
    <property type="term" value="P:lipoprotein localization to outer membrane"/>
    <property type="evidence" value="ECO:0007669"/>
    <property type="project" value="TreeGrafter"/>
</dbReference>
<dbReference type="GO" id="GO:0089705">
    <property type="term" value="P:protein localization to outer membrane"/>
    <property type="evidence" value="ECO:0007669"/>
    <property type="project" value="TreeGrafter"/>
</dbReference>
<dbReference type="CDD" id="cd03255">
    <property type="entry name" value="ABC_MJ0796_LolCDE_FtsE"/>
    <property type="match status" value="1"/>
</dbReference>
<dbReference type="FunFam" id="3.40.50.300:FF:000230">
    <property type="entry name" value="Lipoprotein-releasing system ATP-binding protein LolD"/>
    <property type="match status" value="1"/>
</dbReference>
<dbReference type="Gene3D" id="3.40.50.300">
    <property type="entry name" value="P-loop containing nucleotide triphosphate hydrolases"/>
    <property type="match status" value="1"/>
</dbReference>
<dbReference type="InterPro" id="IPR003593">
    <property type="entry name" value="AAA+_ATPase"/>
</dbReference>
<dbReference type="InterPro" id="IPR003439">
    <property type="entry name" value="ABC_transporter-like_ATP-bd"/>
</dbReference>
<dbReference type="InterPro" id="IPR017871">
    <property type="entry name" value="ABC_transporter-like_CS"/>
</dbReference>
<dbReference type="InterPro" id="IPR015854">
    <property type="entry name" value="ABC_transpr_LolD-like"/>
</dbReference>
<dbReference type="InterPro" id="IPR011924">
    <property type="entry name" value="LolD_lipo_ATP-bd"/>
</dbReference>
<dbReference type="InterPro" id="IPR017911">
    <property type="entry name" value="MacB-like_ATP-bd"/>
</dbReference>
<dbReference type="InterPro" id="IPR027417">
    <property type="entry name" value="P-loop_NTPase"/>
</dbReference>
<dbReference type="NCBIfam" id="TIGR02211">
    <property type="entry name" value="LolD_lipo_ex"/>
    <property type="match status" value="1"/>
</dbReference>
<dbReference type="NCBIfam" id="NF008639">
    <property type="entry name" value="PRK11629.1"/>
    <property type="match status" value="1"/>
</dbReference>
<dbReference type="PANTHER" id="PTHR24220">
    <property type="entry name" value="IMPORT ATP-BINDING PROTEIN"/>
    <property type="match status" value="1"/>
</dbReference>
<dbReference type="PANTHER" id="PTHR24220:SF689">
    <property type="entry name" value="LIPOPROTEIN-RELEASING SYSTEM ATP-BINDING PROTEIN LOLD"/>
    <property type="match status" value="1"/>
</dbReference>
<dbReference type="Pfam" id="PF00005">
    <property type="entry name" value="ABC_tran"/>
    <property type="match status" value="1"/>
</dbReference>
<dbReference type="SMART" id="SM00382">
    <property type="entry name" value="AAA"/>
    <property type="match status" value="1"/>
</dbReference>
<dbReference type="SUPFAM" id="SSF52540">
    <property type="entry name" value="P-loop containing nucleoside triphosphate hydrolases"/>
    <property type="match status" value="1"/>
</dbReference>
<dbReference type="PROSITE" id="PS00211">
    <property type="entry name" value="ABC_TRANSPORTER_1"/>
    <property type="match status" value="1"/>
</dbReference>
<dbReference type="PROSITE" id="PS50893">
    <property type="entry name" value="ABC_TRANSPORTER_2"/>
    <property type="match status" value="1"/>
</dbReference>
<dbReference type="PROSITE" id="PS51244">
    <property type="entry name" value="LOLD"/>
    <property type="match status" value="1"/>
</dbReference>
<feature type="chain" id="PRO_0000272084" description="Lipoprotein-releasing system ATP-binding protein LolD">
    <location>
        <begin position="1"/>
        <end position="233"/>
    </location>
</feature>
<feature type="domain" description="ABC transporter" evidence="1">
    <location>
        <begin position="6"/>
        <end position="233"/>
    </location>
</feature>
<feature type="binding site" evidence="1">
    <location>
        <begin position="42"/>
        <end position="49"/>
    </location>
    <ligand>
        <name>ATP</name>
        <dbReference type="ChEBI" id="CHEBI:30616"/>
    </ligand>
</feature>
<proteinExistence type="inferred from homology"/>
<accession>Q0TIV6</accession>
<reference key="1">
    <citation type="journal article" date="2006" name="Mol. Microbiol.">
        <title>Role of pathogenicity island-associated integrases in the genome plasticity of uropathogenic Escherichia coli strain 536.</title>
        <authorList>
            <person name="Hochhut B."/>
            <person name="Wilde C."/>
            <person name="Balling G."/>
            <person name="Middendorf B."/>
            <person name="Dobrindt U."/>
            <person name="Brzuszkiewicz E."/>
            <person name="Gottschalk G."/>
            <person name="Carniel E."/>
            <person name="Hacker J."/>
        </authorList>
    </citation>
    <scope>NUCLEOTIDE SEQUENCE [LARGE SCALE GENOMIC DNA]</scope>
    <source>
        <strain>536 / UPEC</strain>
    </source>
</reference>
<organism>
    <name type="scientific">Escherichia coli O6:K15:H31 (strain 536 / UPEC)</name>
    <dbReference type="NCBI Taxonomy" id="362663"/>
    <lineage>
        <taxon>Bacteria</taxon>
        <taxon>Pseudomonadati</taxon>
        <taxon>Pseudomonadota</taxon>
        <taxon>Gammaproteobacteria</taxon>
        <taxon>Enterobacterales</taxon>
        <taxon>Enterobacteriaceae</taxon>
        <taxon>Escherichia</taxon>
    </lineage>
</organism>
<keyword id="KW-0067">ATP-binding</keyword>
<keyword id="KW-0997">Cell inner membrane</keyword>
<keyword id="KW-1003">Cell membrane</keyword>
<keyword id="KW-0472">Membrane</keyword>
<keyword id="KW-0547">Nucleotide-binding</keyword>
<keyword id="KW-1278">Translocase</keyword>
<keyword id="KW-0813">Transport</keyword>
<protein>
    <recommendedName>
        <fullName evidence="1">Lipoprotein-releasing system ATP-binding protein LolD</fullName>
        <ecNumber evidence="1">7.6.2.-</ecNumber>
    </recommendedName>
</protein>
<gene>
    <name evidence="1" type="primary">lolD</name>
    <name type="ordered locus">ECP_1110</name>
</gene>
<comment type="function">
    <text evidence="1">Part of the ABC transporter complex LolCDE involved in the translocation of mature outer membrane-directed lipoproteins, from the inner membrane to the periplasmic chaperone, LolA. Responsible for the formation of the LolA-lipoprotein complex in an ATP-dependent manner.</text>
</comment>
<comment type="subunit">
    <text evidence="1">The complex is composed of two ATP-binding proteins (LolD) and two transmembrane proteins (LolC and LolE).</text>
</comment>
<comment type="subcellular location">
    <subcellularLocation>
        <location evidence="1">Cell inner membrane</location>
        <topology evidence="1">Peripheral membrane protein</topology>
    </subcellularLocation>
</comment>
<comment type="similarity">
    <text evidence="1">Belongs to the ABC transporter superfamily. Lipoprotein translocase (TC 3.A.1.125) family.</text>
</comment>
<comment type="sequence caution" evidence="2">
    <conflict type="erroneous initiation">
        <sequence resource="EMBL-CDS" id="ABG69123"/>
    </conflict>
</comment>
<evidence type="ECO:0000255" key="1">
    <source>
        <dbReference type="HAMAP-Rule" id="MF_01708"/>
    </source>
</evidence>
<evidence type="ECO:0000305" key="2"/>
<sequence>MNKILLQCDNLCKRYQEGSVQTDVLHNVSFSVGEGEMMAIVGSSGSGKSTLLHLLGGLDTPTSGDVIFNGQPMSKLSSAAKAELRNQKLGFIYQFHHLLPDFTALENVAMPLLIGKKKPAEINSRALEMLKAVGLEHRANHRPSELSGGERQRVAIARALVNNPRLVLADEPTGNLDARNADSIFQLLGELNRLQGTAFLVVTHDLQLAKRMSRQLEMRDGRLTAELSLMGAE</sequence>